<reference key="1">
    <citation type="journal article" date="1993" name="Mol. Microbiol.">
        <title>Molecular cloning and characterization of 13 out genes from Erwinia carotovora subspecies carotovora: genes encoding members of a general secretion pathway (GSP) widespread in Gram-negative bacteria.</title>
        <authorList>
            <person name="Reeves P.J."/>
            <person name="Whitcombe D."/>
            <person name="Wharam S."/>
            <person name="Gibson M."/>
            <person name="Allison G."/>
            <person name="Bunce N."/>
            <person name="Barallon R."/>
            <person name="Douglas P."/>
            <person name="Mulholland V."/>
            <person name="Stevens S."/>
            <person name="Walker S."/>
            <person name="Salmond G.P.C."/>
        </authorList>
    </citation>
    <scope>NUCLEOTIDE SEQUENCE [GENOMIC DNA]</scope>
    <source>
        <strain>SCRI 193</strain>
    </source>
</reference>
<sequence length="328" mass="36570">MRSRQRGAALLVVLLILALMVTIAAVITERTGKAFLRTESHLSRQQAKWYALGAETLSGQILQRDARNMPGRTFAGQNWSQPGLRFPVDGGEITGQISDARTCFNVNAINQGVDNESTLVKTPYPAQVFRLLLKNLGEETDRAEKITAAVRDWIDADNYPSANGAEDDVYAALPVPYRTANQRMSEISELRSVYGIDSDLYRRLLPYVCALPVDAMSININTLTEFDAPLLSAVFLNEMTMSQAKALVQQRPRMGWASLEVLQQTGLLPPNSKNTAQRVLAVKSEWFFVKLQVRVGDSDFHQRSLLHLSGQKVQVVQRQYGGYRTVNP</sequence>
<gene>
    <name type="primary">outK</name>
</gene>
<protein>
    <recommendedName>
        <fullName>Type II secretion system protein K</fullName>
        <shortName>T2SS protein K</shortName>
    </recommendedName>
    <alternativeName>
        <fullName>General secretion pathway protein K</fullName>
    </alternativeName>
    <alternativeName>
        <fullName>Pectic enzymes secretion protein OutK</fullName>
    </alternativeName>
</protein>
<accession>P31706</accession>
<proteinExistence type="inferred from homology"/>
<comment type="function">
    <text evidence="1">Component of the type II secretion system required for the energy-dependent secretion of extracellular factors such as proteases and toxins from the periplasm. Plays a role in pseudopilus assembly and seems to control its length. Interacts with the pseudopilus tip complex that is critical for the recognition and binding of secretion substrates.</text>
</comment>
<comment type="subunit">
    <text evidence="1">Type II secretion is composed of four main components: the outer membrane complex, the inner membrane complex, the cytoplasmic secretion ATPase and the periplasm-spanning pseudopilus. Interacts with core component OutG.</text>
</comment>
<comment type="subcellular location">
    <subcellularLocation>
        <location evidence="1">Cell inner membrane</location>
    </subcellularLocation>
</comment>
<comment type="PTM">
    <text evidence="1">Cleaved by prepilin peptidase.</text>
</comment>
<comment type="similarity">
    <text evidence="3">Belongs to the GSP K family.</text>
</comment>
<evidence type="ECO:0000250" key="1">
    <source>
        <dbReference type="UniProtKB" id="Q00518"/>
    </source>
</evidence>
<evidence type="ECO:0000255" key="2"/>
<evidence type="ECO:0000305" key="3"/>
<name>GSPK_PECCC</name>
<feature type="propeptide" id="PRO_0000449556" description="Leader sequence" evidence="1">
    <location>
        <begin position="1"/>
        <end position="7"/>
    </location>
</feature>
<feature type="chain" id="PRO_0000449557" description="Type II secretion system protein K">
    <location>
        <begin position="8"/>
        <end position="328"/>
    </location>
</feature>
<feature type="transmembrane region" description="Helical" evidence="2">
    <location>
        <begin position="8"/>
        <end position="28"/>
    </location>
</feature>
<feature type="topological domain" description="Periplasmic" evidence="2">
    <location>
        <begin position="29"/>
        <end position="328"/>
    </location>
</feature>
<keyword id="KW-0997">Cell inner membrane</keyword>
<keyword id="KW-1003">Cell membrane</keyword>
<keyword id="KW-0472">Membrane</keyword>
<keyword id="KW-0653">Protein transport</keyword>
<keyword id="KW-0812">Transmembrane</keyword>
<keyword id="KW-1133">Transmembrane helix</keyword>
<keyword id="KW-0813">Transport</keyword>
<dbReference type="EMBL" id="X70049">
    <property type="protein sequence ID" value="CAA49652.1"/>
    <property type="molecule type" value="Genomic_DNA"/>
</dbReference>
<dbReference type="PIR" id="S32865">
    <property type="entry name" value="S32865"/>
</dbReference>
<dbReference type="RefSeq" id="WP_274214133.1">
    <property type="nucleotide sequence ID" value="NZ_CP117874.1"/>
</dbReference>
<dbReference type="SMR" id="P31706"/>
<dbReference type="GO" id="GO:0005886">
    <property type="term" value="C:plasma membrane"/>
    <property type="evidence" value="ECO:0007669"/>
    <property type="project" value="UniProtKB-SubCell"/>
</dbReference>
<dbReference type="GO" id="GO:0009306">
    <property type="term" value="P:protein secretion"/>
    <property type="evidence" value="ECO:0007669"/>
    <property type="project" value="InterPro"/>
</dbReference>
<dbReference type="Gene3D" id="1.10.40.60">
    <property type="entry name" value="EpsJ-like"/>
    <property type="match status" value="2"/>
</dbReference>
<dbReference type="Gene3D" id="3.30.1300.30">
    <property type="entry name" value="GSPII I/J protein-like"/>
    <property type="match status" value="1"/>
</dbReference>
<dbReference type="InterPro" id="IPR005628">
    <property type="entry name" value="GspK"/>
</dbReference>
<dbReference type="InterPro" id="IPR038072">
    <property type="entry name" value="GspK_central_sf"/>
</dbReference>
<dbReference type="InterPro" id="IPR045584">
    <property type="entry name" value="Pilin-like"/>
</dbReference>
<dbReference type="InterPro" id="IPR049031">
    <property type="entry name" value="T2SSK_SAM-like_1st"/>
</dbReference>
<dbReference type="InterPro" id="IPR049179">
    <property type="entry name" value="T2SSK_SAM-like_2nd"/>
</dbReference>
<dbReference type="NCBIfam" id="NF037980">
    <property type="entry name" value="T2SS_GspK"/>
    <property type="match status" value="1"/>
</dbReference>
<dbReference type="PANTHER" id="PTHR38831">
    <property type="entry name" value="TYPE II SECRETION SYSTEM PROTEIN K"/>
    <property type="match status" value="1"/>
</dbReference>
<dbReference type="PANTHER" id="PTHR38831:SF1">
    <property type="entry name" value="TYPE II SECRETION SYSTEM PROTEIN K-RELATED"/>
    <property type="match status" value="1"/>
</dbReference>
<dbReference type="Pfam" id="PF03934">
    <property type="entry name" value="T2SSK"/>
    <property type="match status" value="1"/>
</dbReference>
<dbReference type="Pfam" id="PF21687">
    <property type="entry name" value="T2SSK_1st"/>
    <property type="match status" value="1"/>
</dbReference>
<dbReference type="PIRSF" id="PIRSF002786">
    <property type="entry name" value="XcpX"/>
    <property type="match status" value="1"/>
</dbReference>
<dbReference type="SUPFAM" id="SSF158544">
    <property type="entry name" value="GspK insert domain-like"/>
    <property type="match status" value="2"/>
</dbReference>
<dbReference type="SUPFAM" id="SSF54523">
    <property type="entry name" value="Pili subunits"/>
    <property type="match status" value="1"/>
</dbReference>
<organism>
    <name type="scientific">Pectobacterium carotovorum subsp. carotovorum</name>
    <name type="common">Erwinia carotovora subsp. carotovora</name>
    <dbReference type="NCBI Taxonomy" id="555"/>
    <lineage>
        <taxon>Bacteria</taxon>
        <taxon>Pseudomonadati</taxon>
        <taxon>Pseudomonadota</taxon>
        <taxon>Gammaproteobacteria</taxon>
        <taxon>Enterobacterales</taxon>
        <taxon>Pectobacteriaceae</taxon>
        <taxon>Pectobacterium</taxon>
    </lineage>
</organism>